<evidence type="ECO:0000255" key="1">
    <source>
        <dbReference type="HAMAP-Rule" id="MF_00075"/>
    </source>
</evidence>
<accession>Q87ZS2</accession>
<keyword id="KW-0963">Cytoplasm</keyword>
<keyword id="KW-0396">Initiation factor</keyword>
<keyword id="KW-0648">Protein biosynthesis</keyword>
<keyword id="KW-1185">Reference proteome</keyword>
<keyword id="KW-0694">RNA-binding</keyword>
<keyword id="KW-0699">rRNA-binding</keyword>
<dbReference type="EMBL" id="AE016853">
    <property type="protein sequence ID" value="AAO56830.1"/>
    <property type="molecule type" value="Genomic_DNA"/>
</dbReference>
<dbReference type="RefSeq" id="NP_793135.1">
    <property type="nucleotide sequence ID" value="NC_004578.1"/>
</dbReference>
<dbReference type="RefSeq" id="WP_003405083.1">
    <property type="nucleotide sequence ID" value="NC_004578.1"/>
</dbReference>
<dbReference type="SMR" id="Q87ZS2"/>
<dbReference type="STRING" id="223283.PSPTO_3352"/>
<dbReference type="GeneID" id="1185011"/>
<dbReference type="KEGG" id="pst:PSPTO_3352"/>
<dbReference type="PATRIC" id="fig|223283.9.peg.3431"/>
<dbReference type="eggNOG" id="COG0361">
    <property type="taxonomic scope" value="Bacteria"/>
</dbReference>
<dbReference type="HOGENOM" id="CLU_151267_1_0_6"/>
<dbReference type="OrthoDB" id="9803250at2"/>
<dbReference type="PhylomeDB" id="Q87ZS2"/>
<dbReference type="Proteomes" id="UP000002515">
    <property type="component" value="Chromosome"/>
</dbReference>
<dbReference type="GO" id="GO:0005829">
    <property type="term" value="C:cytosol"/>
    <property type="evidence" value="ECO:0007669"/>
    <property type="project" value="TreeGrafter"/>
</dbReference>
<dbReference type="GO" id="GO:0043022">
    <property type="term" value="F:ribosome binding"/>
    <property type="evidence" value="ECO:0007669"/>
    <property type="project" value="UniProtKB-UniRule"/>
</dbReference>
<dbReference type="GO" id="GO:0019843">
    <property type="term" value="F:rRNA binding"/>
    <property type="evidence" value="ECO:0007669"/>
    <property type="project" value="UniProtKB-UniRule"/>
</dbReference>
<dbReference type="GO" id="GO:0003743">
    <property type="term" value="F:translation initiation factor activity"/>
    <property type="evidence" value="ECO:0007669"/>
    <property type="project" value="UniProtKB-UniRule"/>
</dbReference>
<dbReference type="CDD" id="cd04451">
    <property type="entry name" value="S1_IF1"/>
    <property type="match status" value="1"/>
</dbReference>
<dbReference type="FunFam" id="2.40.50.140:FF:000002">
    <property type="entry name" value="Translation initiation factor IF-1"/>
    <property type="match status" value="1"/>
</dbReference>
<dbReference type="Gene3D" id="2.40.50.140">
    <property type="entry name" value="Nucleic acid-binding proteins"/>
    <property type="match status" value="1"/>
</dbReference>
<dbReference type="HAMAP" id="MF_00075">
    <property type="entry name" value="IF_1"/>
    <property type="match status" value="1"/>
</dbReference>
<dbReference type="InterPro" id="IPR012340">
    <property type="entry name" value="NA-bd_OB-fold"/>
</dbReference>
<dbReference type="InterPro" id="IPR006196">
    <property type="entry name" value="RNA-binding_domain_S1_IF1"/>
</dbReference>
<dbReference type="InterPro" id="IPR003029">
    <property type="entry name" value="S1_domain"/>
</dbReference>
<dbReference type="InterPro" id="IPR004368">
    <property type="entry name" value="TIF_IF1"/>
</dbReference>
<dbReference type="NCBIfam" id="TIGR00008">
    <property type="entry name" value="infA"/>
    <property type="match status" value="1"/>
</dbReference>
<dbReference type="PANTHER" id="PTHR33370">
    <property type="entry name" value="TRANSLATION INITIATION FACTOR IF-1, CHLOROPLASTIC"/>
    <property type="match status" value="1"/>
</dbReference>
<dbReference type="PANTHER" id="PTHR33370:SF1">
    <property type="entry name" value="TRANSLATION INITIATION FACTOR IF-1, CHLOROPLASTIC"/>
    <property type="match status" value="1"/>
</dbReference>
<dbReference type="Pfam" id="PF01176">
    <property type="entry name" value="eIF-1a"/>
    <property type="match status" value="1"/>
</dbReference>
<dbReference type="SMART" id="SM00316">
    <property type="entry name" value="S1"/>
    <property type="match status" value="1"/>
</dbReference>
<dbReference type="SUPFAM" id="SSF50249">
    <property type="entry name" value="Nucleic acid-binding proteins"/>
    <property type="match status" value="1"/>
</dbReference>
<dbReference type="PROSITE" id="PS50832">
    <property type="entry name" value="S1_IF1_TYPE"/>
    <property type="match status" value="1"/>
</dbReference>
<sequence>MSKEDSFEMEGTVADTLPNTMFRVELENGHVVTAHISGKMRKNYIRILTGDKVRVELTPYDLSKGRITYRAR</sequence>
<protein>
    <recommendedName>
        <fullName evidence="1">Translation initiation factor IF-1</fullName>
    </recommendedName>
</protein>
<comment type="function">
    <text evidence="1">One of the essential components for the initiation of protein synthesis. Stabilizes the binding of IF-2 and IF-3 on the 30S subunit to which N-formylmethionyl-tRNA(fMet) subsequently binds. Helps modulate mRNA selection, yielding the 30S pre-initiation complex (PIC). Upon addition of the 50S ribosomal subunit IF-1, IF-2 and IF-3 are released leaving the mature 70S translation initiation complex.</text>
</comment>
<comment type="subunit">
    <text evidence="1">Component of the 30S ribosomal translation pre-initiation complex which assembles on the 30S ribosome in the order IF-2 and IF-3, IF-1 and N-formylmethionyl-tRNA(fMet); mRNA recruitment can occur at any time during PIC assembly.</text>
</comment>
<comment type="subcellular location">
    <subcellularLocation>
        <location evidence="1">Cytoplasm</location>
    </subcellularLocation>
</comment>
<comment type="similarity">
    <text evidence="1">Belongs to the IF-1 family.</text>
</comment>
<feature type="chain" id="PRO_0000095846" description="Translation initiation factor IF-1">
    <location>
        <begin position="1"/>
        <end position="72"/>
    </location>
</feature>
<feature type="domain" description="S1-like" evidence="1">
    <location>
        <begin position="1"/>
        <end position="72"/>
    </location>
</feature>
<reference key="1">
    <citation type="journal article" date="2003" name="Proc. Natl. Acad. Sci. U.S.A.">
        <title>The complete genome sequence of the Arabidopsis and tomato pathogen Pseudomonas syringae pv. tomato DC3000.</title>
        <authorList>
            <person name="Buell C.R."/>
            <person name="Joardar V."/>
            <person name="Lindeberg M."/>
            <person name="Selengut J."/>
            <person name="Paulsen I.T."/>
            <person name="Gwinn M.L."/>
            <person name="Dodson R.J."/>
            <person name="DeBoy R.T."/>
            <person name="Durkin A.S."/>
            <person name="Kolonay J.F."/>
            <person name="Madupu R."/>
            <person name="Daugherty S.C."/>
            <person name="Brinkac L.M."/>
            <person name="Beanan M.J."/>
            <person name="Haft D.H."/>
            <person name="Nelson W.C."/>
            <person name="Davidsen T.M."/>
            <person name="Zafar N."/>
            <person name="Zhou L."/>
            <person name="Liu J."/>
            <person name="Yuan Q."/>
            <person name="Khouri H.M."/>
            <person name="Fedorova N.B."/>
            <person name="Tran B."/>
            <person name="Russell D."/>
            <person name="Berry K.J."/>
            <person name="Utterback T.R."/>
            <person name="Van Aken S.E."/>
            <person name="Feldblyum T.V."/>
            <person name="D'Ascenzo M."/>
            <person name="Deng W.-L."/>
            <person name="Ramos A.R."/>
            <person name="Alfano J.R."/>
            <person name="Cartinhour S."/>
            <person name="Chatterjee A.K."/>
            <person name="Delaney T.P."/>
            <person name="Lazarowitz S.G."/>
            <person name="Martin G.B."/>
            <person name="Schneider D.J."/>
            <person name="Tang X."/>
            <person name="Bender C.L."/>
            <person name="White O."/>
            <person name="Fraser C.M."/>
            <person name="Collmer A."/>
        </authorList>
    </citation>
    <scope>NUCLEOTIDE SEQUENCE [LARGE SCALE GENOMIC DNA]</scope>
    <source>
        <strain>ATCC BAA-871 / DC3000</strain>
    </source>
</reference>
<organism>
    <name type="scientific">Pseudomonas syringae pv. tomato (strain ATCC BAA-871 / DC3000)</name>
    <dbReference type="NCBI Taxonomy" id="223283"/>
    <lineage>
        <taxon>Bacteria</taxon>
        <taxon>Pseudomonadati</taxon>
        <taxon>Pseudomonadota</taxon>
        <taxon>Gammaproteobacteria</taxon>
        <taxon>Pseudomonadales</taxon>
        <taxon>Pseudomonadaceae</taxon>
        <taxon>Pseudomonas</taxon>
    </lineage>
</organism>
<proteinExistence type="inferred from homology"/>
<name>IF1_PSESM</name>
<gene>
    <name evidence="1" type="primary">infA</name>
    <name type="ordered locus">PSPTO_3352</name>
</gene>